<proteinExistence type="evidence at protein level"/>
<feature type="chain" id="PRO_0000097874" description="Double-strand-break repair protein rad21 homolog">
    <location>
        <begin position="1"/>
        <end position="629"/>
    </location>
</feature>
<feature type="chain" id="PRO_0000446319" description="64-kDa C-terminal product" evidence="2">
    <location>
        <begin position="278"/>
        <end position="629"/>
    </location>
</feature>
<feature type="region of interest" description="Disordered" evidence="5">
    <location>
        <begin position="245"/>
        <end position="284"/>
    </location>
</feature>
<feature type="region of interest" description="Disordered" evidence="5">
    <location>
        <begin position="447"/>
        <end position="475"/>
    </location>
</feature>
<feature type="region of interest" description="Disordered" evidence="5">
    <location>
        <begin position="491"/>
        <end position="553"/>
    </location>
</feature>
<feature type="compositionally biased region" description="Low complexity" evidence="5">
    <location>
        <begin position="273"/>
        <end position="282"/>
    </location>
</feature>
<feature type="compositionally biased region" description="Pro residues" evidence="5">
    <location>
        <begin position="494"/>
        <end position="510"/>
    </location>
</feature>
<feature type="compositionally biased region" description="Acidic residues" evidence="5">
    <location>
        <begin position="531"/>
        <end position="549"/>
    </location>
</feature>
<feature type="site" description="Cleavage; by ESPL1" evidence="1">
    <location>
        <begin position="172"/>
        <end position="173"/>
    </location>
</feature>
<feature type="site" description="Cleavage; by caspases" evidence="2">
    <location>
        <begin position="277"/>
        <end position="278"/>
    </location>
</feature>
<organism>
    <name type="scientific">Xenopus laevis</name>
    <name type="common">African clawed frog</name>
    <dbReference type="NCBI Taxonomy" id="8355"/>
    <lineage>
        <taxon>Eukaryota</taxon>
        <taxon>Metazoa</taxon>
        <taxon>Chordata</taxon>
        <taxon>Craniata</taxon>
        <taxon>Vertebrata</taxon>
        <taxon>Euteleostomi</taxon>
        <taxon>Amphibia</taxon>
        <taxon>Batrachia</taxon>
        <taxon>Anura</taxon>
        <taxon>Pipoidea</taxon>
        <taxon>Pipidae</taxon>
        <taxon>Xenopodinae</taxon>
        <taxon>Xenopus</taxon>
        <taxon>Xenopus</taxon>
    </lineage>
</organism>
<gene>
    <name type="primary">rad21</name>
</gene>
<evidence type="ECO:0000250" key="1"/>
<evidence type="ECO:0000250" key="2">
    <source>
        <dbReference type="UniProtKB" id="O60216"/>
    </source>
</evidence>
<evidence type="ECO:0000250" key="3">
    <source>
        <dbReference type="UniProtKB" id="Q61550"/>
    </source>
</evidence>
<evidence type="ECO:0000250" key="4">
    <source>
        <dbReference type="UniProtKB" id="Q6TEL1"/>
    </source>
</evidence>
<evidence type="ECO:0000256" key="5">
    <source>
        <dbReference type="SAM" id="MobiDB-lite"/>
    </source>
</evidence>
<evidence type="ECO:0000269" key="6">
    <source>
    </source>
</evidence>
<evidence type="ECO:0000269" key="7">
    <source>
    </source>
</evidence>
<evidence type="ECO:0000269" key="8">
    <source>
    </source>
</evidence>
<evidence type="ECO:0000305" key="9"/>
<protein>
    <recommendedName>
        <fullName>Double-strand-break repair protein rad21 homolog</fullName>
    </recommendedName>
    <alternativeName>
        <fullName>SCC1 homolog</fullName>
    </alternativeName>
    <component>
        <recommendedName>
            <fullName>64-kDa C-terminal product</fullName>
        </recommendedName>
        <alternativeName>
            <fullName evidence="2">64-kDa carboxy-terminal product</fullName>
        </alternativeName>
    </component>
</protein>
<dbReference type="EMBL" id="AF051786">
    <property type="protein sequence ID" value="AAC26809.1"/>
    <property type="molecule type" value="mRNA"/>
</dbReference>
<dbReference type="RefSeq" id="NP_001083807.1">
    <property type="nucleotide sequence ID" value="NM_001090338.1"/>
</dbReference>
<dbReference type="SMR" id="O93310"/>
<dbReference type="BioGRID" id="100454">
    <property type="interactions" value="4"/>
</dbReference>
<dbReference type="IntAct" id="O93310">
    <property type="interactions" value="6"/>
</dbReference>
<dbReference type="DNASU" id="399129"/>
<dbReference type="GeneID" id="399129"/>
<dbReference type="KEGG" id="xla:399129"/>
<dbReference type="AGR" id="Xenbase:XB-GENE-17340158"/>
<dbReference type="CTD" id="399129"/>
<dbReference type="Xenbase" id="XB-GENE-17340158">
    <property type="gene designation" value="rad21.L"/>
</dbReference>
<dbReference type="OrthoDB" id="10071381at2759"/>
<dbReference type="Proteomes" id="UP000186698">
    <property type="component" value="Chromosome 6L"/>
</dbReference>
<dbReference type="Bgee" id="399129">
    <property type="expression patterns" value="Expressed in egg cell and 19 other cell types or tissues"/>
</dbReference>
<dbReference type="GO" id="GO:0000775">
    <property type="term" value="C:chromosome, centromeric region"/>
    <property type="evidence" value="ECO:0007669"/>
    <property type="project" value="UniProtKB-SubCell"/>
</dbReference>
<dbReference type="GO" id="GO:0008278">
    <property type="term" value="C:cohesin complex"/>
    <property type="evidence" value="ECO:0000318"/>
    <property type="project" value="GO_Central"/>
</dbReference>
<dbReference type="GO" id="GO:0005829">
    <property type="term" value="C:cytosol"/>
    <property type="evidence" value="ECO:0007669"/>
    <property type="project" value="UniProtKB-SubCell"/>
</dbReference>
<dbReference type="GO" id="GO:0016363">
    <property type="term" value="C:nuclear matrix"/>
    <property type="evidence" value="ECO:0007669"/>
    <property type="project" value="UniProtKB-SubCell"/>
</dbReference>
<dbReference type="GO" id="GO:0000922">
    <property type="term" value="C:spindle pole"/>
    <property type="evidence" value="ECO:0007669"/>
    <property type="project" value="UniProtKB-SubCell"/>
</dbReference>
<dbReference type="GO" id="GO:0003682">
    <property type="term" value="F:chromatin binding"/>
    <property type="evidence" value="ECO:0000318"/>
    <property type="project" value="GO_Central"/>
</dbReference>
<dbReference type="GO" id="GO:0006915">
    <property type="term" value="P:apoptotic process"/>
    <property type="evidence" value="ECO:0007669"/>
    <property type="project" value="UniProtKB-KW"/>
</dbReference>
<dbReference type="GO" id="GO:0051301">
    <property type="term" value="P:cell division"/>
    <property type="evidence" value="ECO:0007669"/>
    <property type="project" value="UniProtKB-KW"/>
</dbReference>
<dbReference type="GO" id="GO:0007059">
    <property type="term" value="P:chromosome segregation"/>
    <property type="evidence" value="ECO:0007669"/>
    <property type="project" value="UniProtKB-KW"/>
</dbReference>
<dbReference type="GO" id="GO:0071168">
    <property type="term" value="P:protein localization to chromatin"/>
    <property type="evidence" value="ECO:0000250"/>
    <property type="project" value="UniProtKB"/>
</dbReference>
<dbReference type="GO" id="GO:1990414">
    <property type="term" value="P:replication-born double-strand break repair via sister chromatid exchange"/>
    <property type="evidence" value="ECO:0000318"/>
    <property type="project" value="GO_Central"/>
</dbReference>
<dbReference type="GO" id="GO:0007062">
    <property type="term" value="P:sister chromatid cohesion"/>
    <property type="evidence" value="ECO:0000318"/>
    <property type="project" value="GO_Central"/>
</dbReference>
<dbReference type="CDD" id="cd21792">
    <property type="entry name" value="Rad21_Rec8_M_NXP1-like"/>
    <property type="match status" value="1"/>
</dbReference>
<dbReference type="FunFam" id="1.10.10.580:FF:000001">
    <property type="entry name" value="double-strand-break repair protein rad21 homolog"/>
    <property type="match status" value="1"/>
</dbReference>
<dbReference type="Gene3D" id="1.10.10.580">
    <property type="entry name" value="Structural maintenance of chromosome 1. Chain E"/>
    <property type="match status" value="1"/>
</dbReference>
<dbReference type="InterPro" id="IPR049589">
    <property type="entry name" value="NXP1_M-like"/>
</dbReference>
<dbReference type="InterPro" id="IPR039781">
    <property type="entry name" value="Rad21/Rec8-like"/>
</dbReference>
<dbReference type="InterPro" id="IPR006909">
    <property type="entry name" value="Rad21/Rec8_C_eu"/>
</dbReference>
<dbReference type="InterPro" id="IPR006910">
    <property type="entry name" value="Rad21_Rec8_N"/>
</dbReference>
<dbReference type="InterPro" id="IPR023093">
    <property type="entry name" value="ScpA-like_C"/>
</dbReference>
<dbReference type="InterPro" id="IPR036390">
    <property type="entry name" value="WH_DNA-bd_sf"/>
</dbReference>
<dbReference type="PANTHER" id="PTHR12585:SF69">
    <property type="entry name" value="FI11703P"/>
    <property type="match status" value="1"/>
</dbReference>
<dbReference type="PANTHER" id="PTHR12585">
    <property type="entry name" value="SCC1 / RAD21 FAMILY MEMBER"/>
    <property type="match status" value="1"/>
</dbReference>
<dbReference type="Pfam" id="PF04824">
    <property type="entry name" value="Rad21_Rec8"/>
    <property type="match status" value="1"/>
</dbReference>
<dbReference type="Pfam" id="PF04825">
    <property type="entry name" value="Rad21_Rec8_N"/>
    <property type="match status" value="1"/>
</dbReference>
<dbReference type="SUPFAM" id="SSF46785">
    <property type="entry name" value="Winged helix' DNA-binding domain"/>
    <property type="match status" value="1"/>
</dbReference>
<comment type="function">
    <molecule>Double-strand-break repair protein rad21 homolog</molecule>
    <text evidence="2 3 4">As a member of the cohesin complex, involved in sister chromatid cohesion from the time of DNA replication in S phase to their segregation in mitosis, a function that is essential for proper chromosome segregation, post-replicative DNA repair, and the prevention of inappropriate recombination between repetitive regions. The cohesin complex may also play a role in spindle pole assembly during mitosis (By similarity). In interphase, cohesins may function in the control of gene expression by binding to numerous sites within the genome (By similarity). May play a role in embryonic gut development, possibly through the regulation of enteric neuron development (By similarity).</text>
</comment>
<comment type="function">
    <molecule>64-kDa C-terminal product</molecule>
    <text evidence="2">May promote apoptosis.</text>
</comment>
<comment type="subunit">
    <text evidence="6 8">Component of the cohesin complex, which consists of an SMC1 and SMC3 heterodimer core and 2 non-Smc subunits RAD21 and STAG1/SA1, STAG2/SA2 or STAG3/SA3.</text>
</comment>
<comment type="subcellular location">
    <molecule>Double-strand-break repair protein rad21 homolog</molecule>
    <subcellularLocation>
        <location evidence="2">Nucleus</location>
    </subcellularLocation>
    <subcellularLocation>
        <location evidence="2">Nucleus matrix</location>
    </subcellularLocation>
    <subcellularLocation>
        <location evidence="7">Chromosome</location>
    </subcellularLocation>
    <subcellularLocation>
        <location evidence="2">Chromosome</location>
        <location evidence="2">Centromere</location>
    </subcellularLocation>
    <subcellularLocation>
        <location evidence="2">Cytoplasm</location>
        <location evidence="2">Cytoskeleton</location>
        <location evidence="2">Spindle pole</location>
    </subcellularLocation>
    <text evidence="2 7">Associates with chromatin. Before prophase, scattered along chromosome arms. During prophase and prometaphase, most cohesins dissociate from the arms of condensing chromosome, possibly through Polo-like kinase PLK1/PLX1-catalyzed phosphorylation (PubMed:11931760). A small amount of cohesin remains in centromeric regions and is removed from chromosomes only at the onset of anaphase. At anaphase, cleavage by separase/ESPL1 leads to the dissociation of cohesin from chromosomes and chromosome separation (By similarity).</text>
</comment>
<comment type="subcellular location">
    <molecule>64-kDa C-terminal product</molecule>
    <subcellularLocation>
        <location evidence="2">Cytoplasm</location>
        <location evidence="2">Cytosol</location>
    </subcellularLocation>
    <subcellularLocation>
        <location evidence="2">Nucleus</location>
    </subcellularLocation>
</comment>
<comment type="domain">
    <text evidence="1">The C-terminal part associates with the head of smc1a, while the N-terminal part binds to the head of smc3.</text>
</comment>
<comment type="PTM">
    <text evidence="2">Cleaved by separase/ESPL1 at the onset of anaphase; this cleavage is required for sister chromatid separation and cytokinesis (By similarity). Cleaved by caspases at the beginning of apoptosis (By similarity).</text>
</comment>
<comment type="PTM">
    <text evidence="7">Phosphorylated; becomes hyperphosphorylated in M phase of cell cycle. The large dissociation of cohesin from chromosome arms during prophase may be partly due to phosphorylation by PLK1/PLX1.</text>
</comment>
<comment type="similarity">
    <text evidence="9">Belongs to the rad21 family.</text>
</comment>
<reference key="1">
    <citation type="journal article" date="1998" name="Genes Dev.">
        <title>Identification of Xenopus SMC protein complexes required for sister chromatid cohesion.</title>
        <authorList>
            <person name="Losada A."/>
            <person name="Hirano M."/>
            <person name="Hirano T."/>
        </authorList>
    </citation>
    <scope>NUCLEOTIDE SEQUENCE [MRNA]</scope>
    <scope>IDENTIFICATION IN THE COHESIN COMPLEX</scope>
    <source>
        <tissue>Egg</tissue>
    </source>
</reference>
<reference key="2">
    <citation type="journal article" date="2000" name="J. Cell Biol.">
        <title>Identification and characterization of SA/Scc3p subunits in the Xenopus and human cohesin complexes.</title>
        <authorList>
            <person name="Losada A."/>
            <person name="Yokochi T."/>
            <person name="Kobayashi R."/>
            <person name="Hirano T."/>
        </authorList>
    </citation>
    <scope>NUCLEOTIDE SEQUENCE [MRNA]</scope>
    <scope>IDENTIFICATION IN THE COHESIN COMPLEX</scope>
</reference>
<reference key="3">
    <citation type="journal article" date="2002" name="Mol. Cell">
        <title>The dissociation of cohesin from chromosomes in prophase is regulated by Polo-like kinase.</title>
        <authorList>
            <person name="Sumara I."/>
            <person name="Vorlaufer E."/>
            <person name="Stukenberg P.T."/>
            <person name="Kelm O."/>
            <person name="Redemann N."/>
            <person name="Nigg E.A."/>
            <person name="Peters J.-M."/>
        </authorList>
    </citation>
    <scope>PHOSPHORYLATION BY PLK1</scope>
    <scope>SUBCELLULAR LOCATION</scope>
</reference>
<sequence>MFYAHFVLSKRGPLAKIWLAAHWDKKLTKAHVFECNLESSVESIICPKVKMALRTSGHLLLGVVRIYHRKAKYLLADCNEAFIKIKMAFRPGVVDLPEENREAAYNAITLPEEFHDFDQPLPDLDDIDVAQQFSLNQSRVEEITMREEVSNINILQDNDFGDFGMDDREMMREGSAFEDDMLTTNASNLKLEPEQSTSQLNEKSNHLEYDDQYKDDNFGEGNEGGILDDKLLSNDAGGIFDDPPAMPEEGVAMPEQPVHDDLDDDDNVSMGAPDSPDSVDPVEPLPTMTDQTTLVPNEEEAFALEPIDITVKETKAKRKRKLIVDSVKELDSKTIRAQLSDYSDIVTTLDLAPPTKKLMMWKETGGVEKLFSLPAQPLWNTRLLKLFTRCLTPLVLDDLRKRRKGGEADNLDEFLKEFENPEVPREELRPQDVIDQPILEEASHLQESLMEGSRTHLDDTIMPPPPPKQGVKRDSLQMEPEPMPMMQEAEPQIEMPPPPLPPPLELPPEEPQSISDLIPELNLLPEKEKEKDEEEEEEEEDTTGTEQDQEERRWNKRTQQMLHGLQRVLAKTGAESISLLDLCRNTNRKQAAAKFYSFLVLKKQQAIELTQREPYSDIVATPGPRFHTV</sequence>
<accession>O93310</accession>
<keyword id="KW-0010">Activator</keyword>
<keyword id="KW-0053">Apoptosis</keyword>
<keyword id="KW-0131">Cell cycle</keyword>
<keyword id="KW-0132">Cell division</keyword>
<keyword id="KW-0137">Centromere</keyword>
<keyword id="KW-0158">Chromosome</keyword>
<keyword id="KW-0159">Chromosome partition</keyword>
<keyword id="KW-0963">Cytoplasm</keyword>
<keyword id="KW-0206">Cytoskeleton</keyword>
<keyword id="KW-0217">Developmental protein</keyword>
<keyword id="KW-0227">DNA damage</keyword>
<keyword id="KW-0234">DNA repair</keyword>
<keyword id="KW-0498">Mitosis</keyword>
<keyword id="KW-0539">Nucleus</keyword>
<keyword id="KW-0597">Phosphoprotein</keyword>
<keyword id="KW-1185">Reference proteome</keyword>
<keyword id="KW-0678">Repressor</keyword>
<keyword id="KW-0804">Transcription</keyword>
<keyword id="KW-0805">Transcription regulation</keyword>
<name>RAD21_XENLA</name>